<accession>B8DW16</accession>
<feature type="chain" id="PRO_1000165723" description="Large ribosomal subunit protein uL2">
    <location>
        <begin position="1"/>
        <end position="276"/>
    </location>
</feature>
<feature type="region of interest" description="Disordered" evidence="2">
    <location>
        <begin position="1"/>
        <end position="58"/>
    </location>
</feature>
<feature type="region of interest" description="Disordered" evidence="2">
    <location>
        <begin position="218"/>
        <end position="276"/>
    </location>
</feature>
<feature type="compositionally biased region" description="Polar residues" evidence="2">
    <location>
        <begin position="16"/>
        <end position="27"/>
    </location>
</feature>
<feature type="compositionally biased region" description="Basic residues" evidence="2">
    <location>
        <begin position="255"/>
        <end position="276"/>
    </location>
</feature>
<name>RL2_BIFA0</name>
<reference key="1">
    <citation type="journal article" date="2009" name="J. Bacteriol.">
        <title>Genome sequence of the probiotic bacterium Bifidobacterium animalis subsp. lactis AD011.</title>
        <authorList>
            <person name="Kim J.F."/>
            <person name="Jeong H."/>
            <person name="Yu D.S."/>
            <person name="Choi S.-H."/>
            <person name="Hur C.-G."/>
            <person name="Park M.-S."/>
            <person name="Yoon S.H."/>
            <person name="Kim D.-W."/>
            <person name="Ji G.E."/>
            <person name="Park H.-S."/>
            <person name="Oh T.K."/>
        </authorList>
    </citation>
    <scope>NUCLEOTIDE SEQUENCE [LARGE SCALE GENOMIC DNA]</scope>
    <source>
        <strain>AD011</strain>
    </source>
</reference>
<gene>
    <name evidence="1" type="primary">rplB</name>
    <name type="ordered locus">BLA_0365</name>
</gene>
<keyword id="KW-1185">Reference proteome</keyword>
<keyword id="KW-0687">Ribonucleoprotein</keyword>
<keyword id="KW-0689">Ribosomal protein</keyword>
<keyword id="KW-0694">RNA-binding</keyword>
<keyword id="KW-0699">rRNA-binding</keyword>
<evidence type="ECO:0000255" key="1">
    <source>
        <dbReference type="HAMAP-Rule" id="MF_01320"/>
    </source>
</evidence>
<evidence type="ECO:0000256" key="2">
    <source>
        <dbReference type="SAM" id="MobiDB-lite"/>
    </source>
</evidence>
<evidence type="ECO:0000305" key="3"/>
<comment type="function">
    <text evidence="1">One of the primary rRNA binding proteins. Required for association of the 30S and 50S subunits to form the 70S ribosome, for tRNA binding and peptide bond formation. It has been suggested to have peptidyltransferase activity; this is somewhat controversial. Makes several contacts with the 16S rRNA in the 70S ribosome.</text>
</comment>
<comment type="subunit">
    <text evidence="1">Part of the 50S ribosomal subunit. Forms a bridge to the 30S subunit in the 70S ribosome.</text>
</comment>
<comment type="similarity">
    <text evidence="1">Belongs to the universal ribosomal protein uL2 family.</text>
</comment>
<proteinExistence type="inferred from homology"/>
<protein>
    <recommendedName>
        <fullName evidence="1">Large ribosomal subunit protein uL2</fullName>
    </recommendedName>
    <alternativeName>
        <fullName evidence="3">50S ribosomal protein L2</fullName>
    </alternativeName>
</protein>
<sequence length="276" mass="30439">MAIRVYKPTTPGRRNASVSDFSDLTRSTPEKSLIRKNSKTGGRNNYGRMTSRHRGGGHKRQYRLIDFRRWDKDGVPATVAQIEYDPNRSARIALLHYADGEKRYIIAPEGIKQGDRIETGANADIKPGNNLPLRNIPTGTVVHAIELRPLGGAKIARSAGAAVQLVAKDGAYAQLRMPSGEIRNVDARCRATVGEVGNSDHANIQLGKAGRARWMGKRPITRGESMNPVDHPHGGRTRGGKPPVSPWGKGEVRTRRPKKASNKMIVRRRPNGKNRK</sequence>
<organism>
    <name type="scientific">Bifidobacterium animalis subsp. lactis (strain AD011)</name>
    <dbReference type="NCBI Taxonomy" id="442563"/>
    <lineage>
        <taxon>Bacteria</taxon>
        <taxon>Bacillati</taxon>
        <taxon>Actinomycetota</taxon>
        <taxon>Actinomycetes</taxon>
        <taxon>Bifidobacteriales</taxon>
        <taxon>Bifidobacteriaceae</taxon>
        <taxon>Bifidobacterium</taxon>
    </lineage>
</organism>
<dbReference type="EMBL" id="CP001213">
    <property type="protein sequence ID" value="ACL28667.1"/>
    <property type="molecule type" value="Genomic_DNA"/>
</dbReference>
<dbReference type="RefSeq" id="WP_004268578.1">
    <property type="nucleotide sequence ID" value="NC_011835.1"/>
</dbReference>
<dbReference type="SMR" id="B8DW16"/>
<dbReference type="STRING" id="442563.BLA_0365"/>
<dbReference type="GeneID" id="29695217"/>
<dbReference type="KEGG" id="bla:BLA_0365"/>
<dbReference type="HOGENOM" id="CLU_036235_2_1_11"/>
<dbReference type="Proteomes" id="UP000002456">
    <property type="component" value="Chromosome"/>
</dbReference>
<dbReference type="GO" id="GO:0015934">
    <property type="term" value="C:large ribosomal subunit"/>
    <property type="evidence" value="ECO:0007669"/>
    <property type="project" value="InterPro"/>
</dbReference>
<dbReference type="GO" id="GO:0019843">
    <property type="term" value="F:rRNA binding"/>
    <property type="evidence" value="ECO:0007669"/>
    <property type="project" value="UniProtKB-UniRule"/>
</dbReference>
<dbReference type="GO" id="GO:0003735">
    <property type="term" value="F:structural constituent of ribosome"/>
    <property type="evidence" value="ECO:0007669"/>
    <property type="project" value="InterPro"/>
</dbReference>
<dbReference type="GO" id="GO:0016740">
    <property type="term" value="F:transferase activity"/>
    <property type="evidence" value="ECO:0007669"/>
    <property type="project" value="InterPro"/>
</dbReference>
<dbReference type="GO" id="GO:0002181">
    <property type="term" value="P:cytoplasmic translation"/>
    <property type="evidence" value="ECO:0007669"/>
    <property type="project" value="TreeGrafter"/>
</dbReference>
<dbReference type="FunFam" id="2.30.30.30:FF:000001">
    <property type="entry name" value="50S ribosomal protein L2"/>
    <property type="match status" value="1"/>
</dbReference>
<dbReference type="FunFam" id="2.40.50.140:FF:000003">
    <property type="entry name" value="50S ribosomal protein L2"/>
    <property type="match status" value="1"/>
</dbReference>
<dbReference type="FunFam" id="4.10.950.10:FF:000001">
    <property type="entry name" value="50S ribosomal protein L2"/>
    <property type="match status" value="1"/>
</dbReference>
<dbReference type="Gene3D" id="2.30.30.30">
    <property type="match status" value="1"/>
</dbReference>
<dbReference type="Gene3D" id="2.40.50.140">
    <property type="entry name" value="Nucleic acid-binding proteins"/>
    <property type="match status" value="1"/>
</dbReference>
<dbReference type="Gene3D" id="4.10.950.10">
    <property type="entry name" value="Ribosomal protein L2, domain 3"/>
    <property type="match status" value="1"/>
</dbReference>
<dbReference type="HAMAP" id="MF_01320_B">
    <property type="entry name" value="Ribosomal_uL2_B"/>
    <property type="match status" value="1"/>
</dbReference>
<dbReference type="InterPro" id="IPR012340">
    <property type="entry name" value="NA-bd_OB-fold"/>
</dbReference>
<dbReference type="InterPro" id="IPR014722">
    <property type="entry name" value="Rib_uL2_dom2"/>
</dbReference>
<dbReference type="InterPro" id="IPR002171">
    <property type="entry name" value="Ribosomal_uL2"/>
</dbReference>
<dbReference type="InterPro" id="IPR005880">
    <property type="entry name" value="Ribosomal_uL2_bac/org-type"/>
</dbReference>
<dbReference type="InterPro" id="IPR022669">
    <property type="entry name" value="Ribosomal_uL2_C"/>
</dbReference>
<dbReference type="InterPro" id="IPR014726">
    <property type="entry name" value="Ribosomal_uL2_dom3"/>
</dbReference>
<dbReference type="InterPro" id="IPR022666">
    <property type="entry name" value="Ribosomal_uL2_RNA-bd_dom"/>
</dbReference>
<dbReference type="InterPro" id="IPR008991">
    <property type="entry name" value="Translation_prot_SH3-like_sf"/>
</dbReference>
<dbReference type="NCBIfam" id="TIGR01171">
    <property type="entry name" value="rplB_bact"/>
    <property type="match status" value="1"/>
</dbReference>
<dbReference type="PANTHER" id="PTHR13691:SF5">
    <property type="entry name" value="LARGE RIBOSOMAL SUBUNIT PROTEIN UL2M"/>
    <property type="match status" value="1"/>
</dbReference>
<dbReference type="PANTHER" id="PTHR13691">
    <property type="entry name" value="RIBOSOMAL PROTEIN L2"/>
    <property type="match status" value="1"/>
</dbReference>
<dbReference type="Pfam" id="PF00181">
    <property type="entry name" value="Ribosomal_L2"/>
    <property type="match status" value="1"/>
</dbReference>
<dbReference type="Pfam" id="PF03947">
    <property type="entry name" value="Ribosomal_L2_C"/>
    <property type="match status" value="1"/>
</dbReference>
<dbReference type="PIRSF" id="PIRSF002158">
    <property type="entry name" value="Ribosomal_L2"/>
    <property type="match status" value="1"/>
</dbReference>
<dbReference type="SMART" id="SM01383">
    <property type="entry name" value="Ribosomal_L2"/>
    <property type="match status" value="1"/>
</dbReference>
<dbReference type="SMART" id="SM01382">
    <property type="entry name" value="Ribosomal_L2_C"/>
    <property type="match status" value="1"/>
</dbReference>
<dbReference type="SUPFAM" id="SSF50249">
    <property type="entry name" value="Nucleic acid-binding proteins"/>
    <property type="match status" value="1"/>
</dbReference>
<dbReference type="SUPFAM" id="SSF50104">
    <property type="entry name" value="Translation proteins SH3-like domain"/>
    <property type="match status" value="1"/>
</dbReference>